<accession>B8GGS3</accession>
<proteinExistence type="inferred from homology"/>
<name>COFG_METPE</name>
<dbReference type="EC" id="4.3.1.32" evidence="1"/>
<dbReference type="EMBL" id="CP001338">
    <property type="protein sequence ID" value="ACL16328.1"/>
    <property type="molecule type" value="Genomic_DNA"/>
</dbReference>
<dbReference type="RefSeq" id="WP_012617647.1">
    <property type="nucleotide sequence ID" value="NC_011832.1"/>
</dbReference>
<dbReference type="SMR" id="B8GGS3"/>
<dbReference type="STRING" id="521011.Mpal_0976"/>
<dbReference type="GeneID" id="7272756"/>
<dbReference type="KEGG" id="mpl:Mpal_0976"/>
<dbReference type="eggNOG" id="arCOG00657">
    <property type="taxonomic scope" value="Archaea"/>
</dbReference>
<dbReference type="HOGENOM" id="CLU_054174_0_0_2"/>
<dbReference type="OrthoDB" id="35347at2157"/>
<dbReference type="UniPathway" id="UPA00072"/>
<dbReference type="Proteomes" id="UP000002457">
    <property type="component" value="Chromosome"/>
</dbReference>
<dbReference type="GO" id="GO:0051539">
    <property type="term" value="F:4 iron, 4 sulfur cluster binding"/>
    <property type="evidence" value="ECO:0007669"/>
    <property type="project" value="UniProtKB-KW"/>
</dbReference>
<dbReference type="GO" id="GO:0044689">
    <property type="term" value="F:7,8-didemethyl-8-hydroxy-5-deazariboflavin synthase activity"/>
    <property type="evidence" value="ECO:0007669"/>
    <property type="project" value="UniProtKB-EC"/>
</dbReference>
<dbReference type="GO" id="GO:0005506">
    <property type="term" value="F:iron ion binding"/>
    <property type="evidence" value="ECO:0007669"/>
    <property type="project" value="UniProtKB-UniRule"/>
</dbReference>
<dbReference type="GO" id="GO:0016765">
    <property type="term" value="F:transferase activity, transferring alkyl or aryl (other than methyl) groups"/>
    <property type="evidence" value="ECO:0007669"/>
    <property type="project" value="InterPro"/>
</dbReference>
<dbReference type="CDD" id="cd01335">
    <property type="entry name" value="Radical_SAM"/>
    <property type="match status" value="1"/>
</dbReference>
<dbReference type="Gene3D" id="3.20.20.70">
    <property type="entry name" value="Aldolase class I"/>
    <property type="match status" value="1"/>
</dbReference>
<dbReference type="HAMAP" id="MF_01611">
    <property type="entry name" value="FO_synth_sub1"/>
    <property type="match status" value="1"/>
</dbReference>
<dbReference type="InterPro" id="IPR013785">
    <property type="entry name" value="Aldolase_TIM"/>
</dbReference>
<dbReference type="InterPro" id="IPR019939">
    <property type="entry name" value="CofG_family"/>
</dbReference>
<dbReference type="InterPro" id="IPR006638">
    <property type="entry name" value="Elp3/MiaA/NifB-like_rSAM"/>
</dbReference>
<dbReference type="InterPro" id="IPR034405">
    <property type="entry name" value="F420"/>
</dbReference>
<dbReference type="InterPro" id="IPR007197">
    <property type="entry name" value="rSAM"/>
</dbReference>
<dbReference type="NCBIfam" id="TIGR03550">
    <property type="entry name" value="F420_cofG"/>
    <property type="match status" value="1"/>
</dbReference>
<dbReference type="NCBIfam" id="NF004884">
    <property type="entry name" value="PRK06245.1"/>
    <property type="match status" value="1"/>
</dbReference>
<dbReference type="PANTHER" id="PTHR43076:SF15">
    <property type="entry name" value="7,8-DIDEMETHYL-8-HYDROXY-5-DEAZARIBOFLAVIN SYNTHASE"/>
    <property type="match status" value="1"/>
</dbReference>
<dbReference type="PANTHER" id="PTHR43076">
    <property type="entry name" value="FO SYNTHASE (COFH)"/>
    <property type="match status" value="1"/>
</dbReference>
<dbReference type="Pfam" id="PF04055">
    <property type="entry name" value="Radical_SAM"/>
    <property type="match status" value="1"/>
</dbReference>
<dbReference type="SFLD" id="SFLDF00294">
    <property type="entry name" value="7_8-didemethyl-8-hydroxy-5-dea"/>
    <property type="match status" value="1"/>
</dbReference>
<dbReference type="SFLD" id="SFLDS00029">
    <property type="entry name" value="Radical_SAM"/>
    <property type="match status" value="1"/>
</dbReference>
<dbReference type="SMART" id="SM00729">
    <property type="entry name" value="Elp3"/>
    <property type="match status" value="1"/>
</dbReference>
<dbReference type="SUPFAM" id="SSF102114">
    <property type="entry name" value="Radical SAM enzymes"/>
    <property type="match status" value="1"/>
</dbReference>
<dbReference type="PROSITE" id="PS51918">
    <property type="entry name" value="RADICAL_SAM"/>
    <property type="match status" value="1"/>
</dbReference>
<reference key="1">
    <citation type="journal article" date="2015" name="Genome Announc.">
        <title>Complete Genome Sequence of Methanosphaerula palustris E1-9CT, a Hydrogenotrophic Methanogen Isolated from a Minerotrophic Fen Peatland.</title>
        <authorList>
            <person name="Cadillo-Quiroz H."/>
            <person name="Browne P."/>
            <person name="Kyrpides N."/>
            <person name="Woyke T."/>
            <person name="Goodwin L."/>
            <person name="Detter C."/>
            <person name="Yavitt J.B."/>
            <person name="Zinder S.H."/>
        </authorList>
    </citation>
    <scope>NUCLEOTIDE SEQUENCE [LARGE SCALE GENOMIC DNA]</scope>
    <source>
        <strain>ATCC BAA-1556 / DSM 19958 / E1-9c</strain>
    </source>
</reference>
<organism>
    <name type="scientific">Methanosphaerula palustris (strain ATCC BAA-1556 / DSM 19958 / E1-9c)</name>
    <dbReference type="NCBI Taxonomy" id="521011"/>
    <lineage>
        <taxon>Archaea</taxon>
        <taxon>Methanobacteriati</taxon>
        <taxon>Methanobacteriota</taxon>
        <taxon>Stenosarchaea group</taxon>
        <taxon>Methanomicrobia</taxon>
        <taxon>Methanomicrobiales</taxon>
        <taxon>Methanoregulaceae</taxon>
        <taxon>Methanosphaerula</taxon>
    </lineage>
</organism>
<feature type="chain" id="PRO_1000215705" description="7,8-didemethyl-8-hydroxy-5-deazariboflavin synthase">
    <location>
        <begin position="1"/>
        <end position="327"/>
    </location>
</feature>
<feature type="domain" description="Radical SAM core" evidence="2">
    <location>
        <begin position="6"/>
        <end position="244"/>
    </location>
</feature>
<feature type="binding site" evidence="1">
    <location>
        <position position="20"/>
    </location>
    <ligand>
        <name>[4Fe-4S] cluster</name>
        <dbReference type="ChEBI" id="CHEBI:49883"/>
        <note>4Fe-4S-S-AdoMet</note>
    </ligand>
</feature>
<feature type="binding site" evidence="1">
    <location>
        <position position="24"/>
    </location>
    <ligand>
        <name>[4Fe-4S] cluster</name>
        <dbReference type="ChEBI" id="CHEBI:49883"/>
        <note>4Fe-4S-S-AdoMet</note>
    </ligand>
</feature>
<feature type="binding site" evidence="1">
    <location>
        <position position="27"/>
    </location>
    <ligand>
        <name>[4Fe-4S] cluster</name>
        <dbReference type="ChEBI" id="CHEBI:49883"/>
        <note>4Fe-4S-S-AdoMet</note>
    </ligand>
</feature>
<protein>
    <recommendedName>
        <fullName evidence="1">7,8-didemethyl-8-hydroxy-5-deazariboflavin synthase</fullName>
        <ecNumber evidence="1">4.3.1.32</ecNumber>
    </recommendedName>
    <alternativeName>
        <fullName evidence="1">FO synthase subunit 1</fullName>
    </alternativeName>
</protein>
<evidence type="ECO:0000255" key="1">
    <source>
        <dbReference type="HAMAP-Rule" id="MF_01611"/>
    </source>
</evidence>
<evidence type="ECO:0000255" key="2">
    <source>
        <dbReference type="PROSITE-ProRule" id="PRU01266"/>
    </source>
</evidence>
<sequence>MHQGVITFSRNVFLPLTTVCQNHCGYCSFWTPIQKGCIMGREQVIETLRLGAGAGCTEALFTFGERPEMVPGFSEHLAAIGYSSILDYCYDLCKEALRFGILPHTNAGVLSTGEMERLREVNASMGLMLETTADVPAHQGSIGKSPAERLSMIARAGKLRIPFTTGILLGIGETTRDREESLEAIADLQREYGHIQEVIVQNFCPKEGTPMADVTPITTETFCETVRMARAILPEEVAVQVAPNLADAGVLVGCGANDLGGISPVTIDYVNPEHPWPAIDRLTEVAGDAVLRERLCIYPQYITQGWYPPSMEPLIRSLSIKIQERSL</sequence>
<comment type="function">
    <text evidence="1">Catalyzes the radical-mediated synthesis of 7,8-didemethyl-8-hydroxy-5-deazariboflavin from 5-amino-5-(4-hydroxybenzyl)-6-(D-ribitylimino)-5,6-dihydrouracil.</text>
</comment>
<comment type="catalytic activity">
    <reaction evidence="1">
        <text>5-amino-5-(4-hydroxybenzyl)-6-(D-ribitylimino)-5,6-dihydrouracil + S-adenosyl-L-methionine = 7,8-didemethyl-8-hydroxy-5-deazariboflavin + 5'-deoxyadenosine + L-methionine + NH4(+) + H(+)</text>
        <dbReference type="Rhea" id="RHEA:55204"/>
        <dbReference type="ChEBI" id="CHEBI:15378"/>
        <dbReference type="ChEBI" id="CHEBI:17319"/>
        <dbReference type="ChEBI" id="CHEBI:28938"/>
        <dbReference type="ChEBI" id="CHEBI:57844"/>
        <dbReference type="ChEBI" id="CHEBI:59789"/>
        <dbReference type="ChEBI" id="CHEBI:59904"/>
        <dbReference type="ChEBI" id="CHEBI:85936"/>
        <dbReference type="EC" id="4.3.1.32"/>
    </reaction>
</comment>
<comment type="cofactor">
    <cofactor evidence="1">
        <name>[4Fe-4S] cluster</name>
        <dbReference type="ChEBI" id="CHEBI:49883"/>
    </cofactor>
    <text evidence="1">Binds 1 [4Fe-4S] cluster. The cluster is coordinated with 3 cysteines and an exchangeable S-adenosyl-L-methionine.</text>
</comment>
<comment type="pathway">
    <text evidence="1">Cofactor biosynthesis; coenzyme F0 biosynthesis.</text>
</comment>
<comment type="subunit">
    <text evidence="1">Consists of two subunits, CofG and CofH.</text>
</comment>
<comment type="similarity">
    <text evidence="1">Belongs to the radical SAM superfamily. CofG family.</text>
</comment>
<gene>
    <name evidence="1" type="primary">cofG</name>
    <name type="ordered locus">Mpal_0976</name>
</gene>
<keyword id="KW-0004">4Fe-4S</keyword>
<keyword id="KW-0408">Iron</keyword>
<keyword id="KW-0411">Iron-sulfur</keyword>
<keyword id="KW-0456">Lyase</keyword>
<keyword id="KW-0479">Metal-binding</keyword>
<keyword id="KW-1185">Reference proteome</keyword>
<keyword id="KW-0949">S-adenosyl-L-methionine</keyword>